<dbReference type="EC" id="2.7.2.8" evidence="1"/>
<dbReference type="EMBL" id="CP000305">
    <property type="protein sequence ID" value="ABG16376.1"/>
    <property type="molecule type" value="Genomic_DNA"/>
</dbReference>
<dbReference type="EMBL" id="ACNQ01000019">
    <property type="protein sequence ID" value="EEO74964.1"/>
    <property type="molecule type" value="Genomic_DNA"/>
</dbReference>
<dbReference type="SMR" id="Q1CNQ4"/>
<dbReference type="KEGG" id="ypn:YPN_0043"/>
<dbReference type="HOGENOM" id="CLU_053680_1_1_6"/>
<dbReference type="UniPathway" id="UPA00068">
    <property type="reaction ID" value="UER00107"/>
</dbReference>
<dbReference type="Proteomes" id="UP000008936">
    <property type="component" value="Chromosome"/>
</dbReference>
<dbReference type="GO" id="GO:0005737">
    <property type="term" value="C:cytoplasm"/>
    <property type="evidence" value="ECO:0007669"/>
    <property type="project" value="UniProtKB-SubCell"/>
</dbReference>
<dbReference type="GO" id="GO:0003991">
    <property type="term" value="F:acetylglutamate kinase activity"/>
    <property type="evidence" value="ECO:0007669"/>
    <property type="project" value="UniProtKB-UniRule"/>
</dbReference>
<dbReference type="GO" id="GO:0005524">
    <property type="term" value="F:ATP binding"/>
    <property type="evidence" value="ECO:0007669"/>
    <property type="project" value="UniProtKB-UniRule"/>
</dbReference>
<dbReference type="GO" id="GO:0042450">
    <property type="term" value="P:arginine biosynthetic process via ornithine"/>
    <property type="evidence" value="ECO:0007669"/>
    <property type="project" value="UniProtKB-UniRule"/>
</dbReference>
<dbReference type="GO" id="GO:0006526">
    <property type="term" value="P:L-arginine biosynthetic process"/>
    <property type="evidence" value="ECO:0007669"/>
    <property type="project" value="UniProtKB-UniPathway"/>
</dbReference>
<dbReference type="CDD" id="cd04249">
    <property type="entry name" value="AAK_NAGK-NC"/>
    <property type="match status" value="1"/>
</dbReference>
<dbReference type="FunFam" id="3.40.1160.10:FF:000008">
    <property type="entry name" value="Acetylglutamate kinase"/>
    <property type="match status" value="1"/>
</dbReference>
<dbReference type="Gene3D" id="3.40.1160.10">
    <property type="entry name" value="Acetylglutamate kinase-like"/>
    <property type="match status" value="1"/>
</dbReference>
<dbReference type="HAMAP" id="MF_00082">
    <property type="entry name" value="ArgB"/>
    <property type="match status" value="1"/>
</dbReference>
<dbReference type="InterPro" id="IPR036393">
    <property type="entry name" value="AceGlu_kinase-like_sf"/>
</dbReference>
<dbReference type="InterPro" id="IPR004662">
    <property type="entry name" value="AcgluKinase_fam"/>
</dbReference>
<dbReference type="InterPro" id="IPR037528">
    <property type="entry name" value="ArgB"/>
</dbReference>
<dbReference type="InterPro" id="IPR001048">
    <property type="entry name" value="Asp/Glu/Uridylate_kinase"/>
</dbReference>
<dbReference type="InterPro" id="IPR041731">
    <property type="entry name" value="NAGK-NC"/>
</dbReference>
<dbReference type="NCBIfam" id="TIGR00761">
    <property type="entry name" value="argB"/>
    <property type="match status" value="1"/>
</dbReference>
<dbReference type="PANTHER" id="PTHR23342">
    <property type="entry name" value="N-ACETYLGLUTAMATE SYNTHASE"/>
    <property type="match status" value="1"/>
</dbReference>
<dbReference type="PANTHER" id="PTHR23342:SF0">
    <property type="entry name" value="N-ACETYLGLUTAMATE SYNTHASE, MITOCHONDRIAL"/>
    <property type="match status" value="1"/>
</dbReference>
<dbReference type="Pfam" id="PF00696">
    <property type="entry name" value="AA_kinase"/>
    <property type="match status" value="1"/>
</dbReference>
<dbReference type="PIRSF" id="PIRSF000728">
    <property type="entry name" value="NAGK"/>
    <property type="match status" value="1"/>
</dbReference>
<dbReference type="SUPFAM" id="SSF53633">
    <property type="entry name" value="Carbamate kinase-like"/>
    <property type="match status" value="1"/>
</dbReference>
<feature type="chain" id="PRO_0000264786" description="Acetylglutamate kinase">
    <location>
        <begin position="1"/>
        <end position="258"/>
    </location>
</feature>
<feature type="binding site" evidence="1">
    <location>
        <begin position="44"/>
        <end position="45"/>
    </location>
    <ligand>
        <name>substrate</name>
    </ligand>
</feature>
<feature type="binding site" evidence="1">
    <location>
        <position position="66"/>
    </location>
    <ligand>
        <name>substrate</name>
    </ligand>
</feature>
<feature type="binding site" evidence="1">
    <location>
        <position position="158"/>
    </location>
    <ligand>
        <name>substrate</name>
    </ligand>
</feature>
<feature type="binding site" evidence="1">
    <location>
        <begin position="181"/>
        <end position="186"/>
    </location>
    <ligand>
        <name>ATP</name>
        <dbReference type="ChEBI" id="CHEBI:30616"/>
    </ligand>
</feature>
<feature type="binding site" evidence="1">
    <location>
        <begin position="209"/>
        <end position="211"/>
    </location>
    <ligand>
        <name>ATP</name>
        <dbReference type="ChEBI" id="CHEBI:30616"/>
    </ligand>
</feature>
<feature type="site" description="Transition state stabilizer" evidence="1">
    <location>
        <position position="8"/>
    </location>
</feature>
<feature type="site" description="Transition state stabilizer" evidence="1">
    <location>
        <position position="217"/>
    </location>
</feature>
<name>ARGB_YERPN</name>
<keyword id="KW-0028">Amino-acid biosynthesis</keyword>
<keyword id="KW-0055">Arginine biosynthesis</keyword>
<keyword id="KW-0067">ATP-binding</keyword>
<keyword id="KW-0963">Cytoplasm</keyword>
<keyword id="KW-0418">Kinase</keyword>
<keyword id="KW-0547">Nucleotide-binding</keyword>
<keyword id="KW-0808">Transferase</keyword>
<sequence>MMNPLVIKLGGVLLDSEEALERLFTALVTYREKHERPLVIMHGGGCLVDELMKRLALPVVKKNGLRVTPADQIDIITGALAGTANKTLLAWAVKHQINAVGLCLADGNTVTVTLLDAELGHVGKAQPGSAALVQTLLAAGYMPIISSIGITVEGQLMNVNADQAATALAATLGADLILLSDVSGILDGKGQRIAEMTAQKAEQLIAQGIITDGMVVKVNAALDAARSLGRPVDIASWRHSEQLPALFNGVPIGTRISV</sequence>
<reference key="1">
    <citation type="journal article" date="2006" name="J. Bacteriol.">
        <title>Complete genome sequence of Yersinia pestis strains Antiqua and Nepal516: evidence of gene reduction in an emerging pathogen.</title>
        <authorList>
            <person name="Chain P.S.G."/>
            <person name="Hu P."/>
            <person name="Malfatti S.A."/>
            <person name="Radnedge L."/>
            <person name="Larimer F."/>
            <person name="Vergez L.M."/>
            <person name="Worsham P."/>
            <person name="Chu M.C."/>
            <person name="Andersen G.L."/>
        </authorList>
    </citation>
    <scope>NUCLEOTIDE SEQUENCE [LARGE SCALE GENOMIC DNA]</scope>
    <source>
        <strain>Nepal516</strain>
    </source>
</reference>
<reference key="2">
    <citation type="submission" date="2009-04" db="EMBL/GenBank/DDBJ databases">
        <title>Yersinia pestis Nepal516A whole genome shotgun sequencing project.</title>
        <authorList>
            <person name="Plunkett G. III"/>
            <person name="Anderson B.D."/>
            <person name="Baumler D.J."/>
            <person name="Burland V."/>
            <person name="Cabot E.L."/>
            <person name="Glasner J.D."/>
            <person name="Mau B."/>
            <person name="Neeno-Eckwall E."/>
            <person name="Perna N.T."/>
            <person name="Munk A.C."/>
            <person name="Tapia R."/>
            <person name="Green L.D."/>
            <person name="Rogers Y.C."/>
            <person name="Detter J.C."/>
            <person name="Bruce D.C."/>
            <person name="Brettin T.S."/>
        </authorList>
    </citation>
    <scope>NUCLEOTIDE SEQUENCE [LARGE SCALE GENOMIC DNA]</scope>
    <source>
        <strain>Nepal516</strain>
    </source>
</reference>
<gene>
    <name evidence="1" type="primary">argB</name>
    <name type="ordered locus">YPN_0043</name>
    <name type="ORF">YP516_4581</name>
</gene>
<organism>
    <name type="scientific">Yersinia pestis bv. Antiqua (strain Nepal516)</name>
    <dbReference type="NCBI Taxonomy" id="377628"/>
    <lineage>
        <taxon>Bacteria</taxon>
        <taxon>Pseudomonadati</taxon>
        <taxon>Pseudomonadota</taxon>
        <taxon>Gammaproteobacteria</taxon>
        <taxon>Enterobacterales</taxon>
        <taxon>Yersiniaceae</taxon>
        <taxon>Yersinia</taxon>
    </lineage>
</organism>
<evidence type="ECO:0000255" key="1">
    <source>
        <dbReference type="HAMAP-Rule" id="MF_00082"/>
    </source>
</evidence>
<accession>Q1CNQ4</accession>
<accession>D1Q361</accession>
<proteinExistence type="inferred from homology"/>
<comment type="function">
    <text evidence="1">Catalyzes the ATP-dependent phosphorylation of N-acetyl-L-glutamate.</text>
</comment>
<comment type="catalytic activity">
    <reaction evidence="1">
        <text>N-acetyl-L-glutamate + ATP = N-acetyl-L-glutamyl 5-phosphate + ADP</text>
        <dbReference type="Rhea" id="RHEA:14629"/>
        <dbReference type="ChEBI" id="CHEBI:30616"/>
        <dbReference type="ChEBI" id="CHEBI:44337"/>
        <dbReference type="ChEBI" id="CHEBI:57936"/>
        <dbReference type="ChEBI" id="CHEBI:456216"/>
        <dbReference type="EC" id="2.7.2.8"/>
    </reaction>
</comment>
<comment type="pathway">
    <text evidence="1">Amino-acid biosynthesis; L-arginine biosynthesis; N(2)-acetyl-L-ornithine from L-glutamate: step 2/4.</text>
</comment>
<comment type="subunit">
    <text evidence="1">Homodimer.</text>
</comment>
<comment type="subcellular location">
    <subcellularLocation>
        <location evidence="1">Cytoplasm</location>
    </subcellularLocation>
</comment>
<comment type="similarity">
    <text evidence="1">Belongs to the acetylglutamate kinase family. ArgB subfamily.</text>
</comment>
<protein>
    <recommendedName>
        <fullName evidence="1">Acetylglutamate kinase</fullName>
        <ecNumber evidence="1">2.7.2.8</ecNumber>
    </recommendedName>
    <alternativeName>
        <fullName evidence="1">N-acetyl-L-glutamate 5-phosphotransferase</fullName>
    </alternativeName>
    <alternativeName>
        <fullName evidence="1">NAG kinase</fullName>
        <shortName evidence="1">NAGK</shortName>
    </alternativeName>
</protein>